<keyword id="KW-0963">Cytoplasm</keyword>
<accession>B4T4R7</accession>
<proteinExistence type="inferred from homology"/>
<protein>
    <recommendedName>
        <fullName evidence="1">Cysteine desulfuration protein SufE</fullName>
    </recommendedName>
</protein>
<gene>
    <name evidence="1" type="primary">sufE</name>
    <name type="ordered locus">SNSL254_A1487</name>
</gene>
<organism>
    <name type="scientific">Salmonella newport (strain SL254)</name>
    <dbReference type="NCBI Taxonomy" id="423368"/>
    <lineage>
        <taxon>Bacteria</taxon>
        <taxon>Pseudomonadati</taxon>
        <taxon>Pseudomonadota</taxon>
        <taxon>Gammaproteobacteria</taxon>
        <taxon>Enterobacterales</taxon>
        <taxon>Enterobacteriaceae</taxon>
        <taxon>Salmonella</taxon>
    </lineage>
</organism>
<evidence type="ECO:0000255" key="1">
    <source>
        <dbReference type="HAMAP-Rule" id="MF_01832"/>
    </source>
</evidence>
<comment type="function">
    <text evidence="1">Participates in cysteine desulfuration mediated by SufS. Cysteine desulfuration mobilizes sulfur from L-cysteine to yield L-alanine and constitutes an essential step in sulfur metabolism for biosynthesis of a variety of sulfur-containing biomolecules. Functions as a sulfur acceptor for SufS, by mediating the direct transfer of the sulfur atom from the S-sulfanylcysteine of SufS, an intermediate product of cysteine desulfuration process.</text>
</comment>
<comment type="pathway">
    <text evidence="1">Cofactor biosynthesis; iron-sulfur cluster biosynthesis.</text>
</comment>
<comment type="subunit">
    <text evidence="1">Homodimer. Interacts with SufS.</text>
</comment>
<comment type="subcellular location">
    <subcellularLocation>
        <location evidence="1">Cytoplasm</location>
    </subcellularLocation>
</comment>
<comment type="similarity">
    <text evidence="1">Belongs to the SufE family.</text>
</comment>
<reference key="1">
    <citation type="journal article" date="2011" name="J. Bacteriol.">
        <title>Comparative genomics of 28 Salmonella enterica isolates: evidence for CRISPR-mediated adaptive sublineage evolution.</title>
        <authorList>
            <person name="Fricke W.F."/>
            <person name="Mammel M.K."/>
            <person name="McDermott P.F."/>
            <person name="Tartera C."/>
            <person name="White D.G."/>
            <person name="Leclerc J.E."/>
            <person name="Ravel J."/>
            <person name="Cebula T.A."/>
        </authorList>
    </citation>
    <scope>NUCLEOTIDE SEQUENCE [LARGE SCALE GENOMIC DNA]</scope>
    <source>
        <strain>SL254</strain>
    </source>
</reference>
<name>SUFE_SALNS</name>
<feature type="chain" id="PRO_1000188335" description="Cysteine desulfuration protein SufE">
    <location>
        <begin position="1"/>
        <end position="138"/>
    </location>
</feature>
<feature type="active site" description="Cysteine persulfide intermediate" evidence="1">
    <location>
        <position position="51"/>
    </location>
</feature>
<dbReference type="EMBL" id="CP001113">
    <property type="protein sequence ID" value="ACF61896.1"/>
    <property type="molecule type" value="Genomic_DNA"/>
</dbReference>
<dbReference type="RefSeq" id="WP_000729468.1">
    <property type="nucleotide sequence ID" value="NZ_CCMR01000003.1"/>
</dbReference>
<dbReference type="SMR" id="B4T4R7"/>
<dbReference type="KEGG" id="see:SNSL254_A1487"/>
<dbReference type="HOGENOM" id="CLU_124502_1_1_6"/>
<dbReference type="UniPathway" id="UPA00266"/>
<dbReference type="Proteomes" id="UP000008824">
    <property type="component" value="Chromosome"/>
</dbReference>
<dbReference type="GO" id="GO:0005737">
    <property type="term" value="C:cytoplasm"/>
    <property type="evidence" value="ECO:0007669"/>
    <property type="project" value="UniProtKB-SubCell"/>
</dbReference>
<dbReference type="GO" id="GO:0016226">
    <property type="term" value="P:iron-sulfur cluster assembly"/>
    <property type="evidence" value="ECO:0007669"/>
    <property type="project" value="InterPro"/>
</dbReference>
<dbReference type="GO" id="GO:0006790">
    <property type="term" value="P:sulfur compound metabolic process"/>
    <property type="evidence" value="ECO:0007669"/>
    <property type="project" value="InterPro"/>
</dbReference>
<dbReference type="Gene3D" id="3.90.1010.10">
    <property type="match status" value="1"/>
</dbReference>
<dbReference type="HAMAP" id="MF_01832">
    <property type="entry name" value="SufE"/>
    <property type="match status" value="1"/>
</dbReference>
<dbReference type="InterPro" id="IPR023939">
    <property type="entry name" value="Cysteine_desulfuration_SufE"/>
</dbReference>
<dbReference type="InterPro" id="IPR003808">
    <property type="entry name" value="Fe-S_metab-assoc_dom"/>
</dbReference>
<dbReference type="NCBIfam" id="NF006792">
    <property type="entry name" value="PRK09296.1"/>
    <property type="match status" value="1"/>
</dbReference>
<dbReference type="PANTHER" id="PTHR43597:SF3">
    <property type="entry name" value="CYSTEINE DESULFURATION PROTEIN SUFE"/>
    <property type="match status" value="1"/>
</dbReference>
<dbReference type="PANTHER" id="PTHR43597">
    <property type="entry name" value="SULFUR ACCEPTOR PROTEIN CSDE"/>
    <property type="match status" value="1"/>
</dbReference>
<dbReference type="Pfam" id="PF02657">
    <property type="entry name" value="SufE"/>
    <property type="match status" value="1"/>
</dbReference>
<dbReference type="SUPFAM" id="SSF82649">
    <property type="entry name" value="SufE/NifU"/>
    <property type="match status" value="1"/>
</dbReference>
<sequence>MAALPDKEKLLRNFTRCANWEEKYLYIIELGQRLAELNPQDRNPQNTIHGCQSQVWIVMRRNANGIIELQGDSDAAIVKGLMAVVFILYHQMTAQDIVHFDVRPWFEKMALAQHLTPSRSQGLEAMIRAIRAKAATLS</sequence>